<accession>O01509</accession>
<protein>
    <recommendedName>
        <fullName>Serpentine receptor class beta-15</fullName>
        <shortName>Protein srb-15</shortName>
    </recommendedName>
</protein>
<proteinExistence type="inferred from homology"/>
<reference key="1">
    <citation type="journal article" date="1998" name="Science">
        <title>Genome sequence of the nematode C. elegans: a platform for investigating biology.</title>
        <authorList>
            <consortium name="The C. elegans sequencing consortium"/>
        </authorList>
    </citation>
    <scope>NUCLEOTIDE SEQUENCE [LARGE SCALE GENOMIC DNA]</scope>
    <source>
        <strain>Bristol N2</strain>
    </source>
</reference>
<dbReference type="EMBL" id="FO080896">
    <property type="protein sequence ID" value="CCD67582.1"/>
    <property type="molecule type" value="Genomic_DNA"/>
</dbReference>
<dbReference type="PIR" id="T28922">
    <property type="entry name" value="T28922"/>
</dbReference>
<dbReference type="RefSeq" id="NP_491969.2">
    <property type="nucleotide sequence ID" value="NM_059568.3"/>
</dbReference>
<dbReference type="SMR" id="O01509"/>
<dbReference type="BioGRID" id="48392">
    <property type="interactions" value="8"/>
</dbReference>
<dbReference type="FunCoup" id="O01509">
    <property type="interactions" value="1"/>
</dbReference>
<dbReference type="STRING" id="6239.C48B6.5.1"/>
<dbReference type="PaxDb" id="6239-C48B6.5"/>
<dbReference type="EnsemblMetazoa" id="C48B6.5.1">
    <property type="protein sequence ID" value="C48B6.5.1"/>
    <property type="gene ID" value="WBGene00016743"/>
</dbReference>
<dbReference type="GeneID" id="183571"/>
<dbReference type="KEGG" id="cel:CELE_C48B6.5"/>
<dbReference type="UCSC" id="C48B6.5">
    <property type="organism name" value="c. elegans"/>
</dbReference>
<dbReference type="AGR" id="WB:WBGene00016743"/>
<dbReference type="CTD" id="183571"/>
<dbReference type="WormBase" id="C48B6.5">
    <property type="protein sequence ID" value="CE38163"/>
    <property type="gene ID" value="WBGene00016743"/>
    <property type="gene designation" value="srb-15"/>
</dbReference>
<dbReference type="eggNOG" id="ENOG502THCV">
    <property type="taxonomic scope" value="Eukaryota"/>
</dbReference>
<dbReference type="GeneTree" id="ENSGT00970000195867"/>
<dbReference type="HOGENOM" id="CLU_045882_0_0_1"/>
<dbReference type="InParanoid" id="O01509"/>
<dbReference type="OMA" id="QWATITR"/>
<dbReference type="OrthoDB" id="5870437at2759"/>
<dbReference type="PhylomeDB" id="O01509"/>
<dbReference type="PRO" id="PR:O01509"/>
<dbReference type="Proteomes" id="UP000001940">
    <property type="component" value="Chromosome I"/>
</dbReference>
<dbReference type="GO" id="GO:0016020">
    <property type="term" value="C:membrane"/>
    <property type="evidence" value="ECO:0007669"/>
    <property type="project" value="UniProtKB-SubCell"/>
</dbReference>
<dbReference type="GO" id="GO:0004888">
    <property type="term" value="F:transmembrane signaling receptor activity"/>
    <property type="evidence" value="ECO:0007669"/>
    <property type="project" value="InterPro"/>
</dbReference>
<dbReference type="GO" id="GO:0007606">
    <property type="term" value="P:sensory perception of chemical stimulus"/>
    <property type="evidence" value="ECO:0007669"/>
    <property type="project" value="InterPro"/>
</dbReference>
<dbReference type="InterPro" id="IPR002184">
    <property type="entry name" value="7TM_GPCR_serpentine_rcpt_Srb"/>
</dbReference>
<dbReference type="PANTHER" id="PTHR31216">
    <property type="entry name" value="SERPENTINE RECEPTOR CLASS BETA-1-RELATED-RELATED"/>
    <property type="match status" value="1"/>
</dbReference>
<dbReference type="PANTHER" id="PTHR31216:SF3">
    <property type="entry name" value="SERPENTINE RECEPTOR CLASS BETA-15-RELATED"/>
    <property type="match status" value="1"/>
</dbReference>
<dbReference type="Pfam" id="PF02175">
    <property type="entry name" value="7TM_GPCR_Srb"/>
    <property type="match status" value="1"/>
</dbReference>
<dbReference type="PRINTS" id="PR00699">
    <property type="entry name" value="TMPROTEINSRB"/>
</dbReference>
<gene>
    <name type="primary">srb-15</name>
    <name type="ORF">C48B6.5</name>
</gene>
<evidence type="ECO:0000255" key="1"/>
<evidence type="ECO:0000305" key="2"/>
<organism>
    <name type="scientific">Caenorhabditis elegans</name>
    <dbReference type="NCBI Taxonomy" id="6239"/>
    <lineage>
        <taxon>Eukaryota</taxon>
        <taxon>Metazoa</taxon>
        <taxon>Ecdysozoa</taxon>
        <taxon>Nematoda</taxon>
        <taxon>Chromadorea</taxon>
        <taxon>Rhabditida</taxon>
        <taxon>Rhabditina</taxon>
        <taxon>Rhabditomorpha</taxon>
        <taxon>Rhabditoidea</taxon>
        <taxon>Rhabditidae</taxon>
        <taxon>Peloderinae</taxon>
        <taxon>Caenorhabditis</taxon>
    </lineage>
</organism>
<comment type="subcellular location">
    <subcellularLocation>
        <location evidence="2">Membrane</location>
        <topology evidence="2">Multi-pass membrane protein</topology>
    </subcellularLocation>
</comment>
<comment type="similarity">
    <text evidence="2">Belongs to the nematode receptor-like protein srb family.</text>
</comment>
<name>SRB15_CAEEL</name>
<sequence>MTEISEICETAFKLTYHPIYRGSLFIHLFVSISSIIPLIYFVIFKLPKTSFHGNLKFLFSAYFVSVFLFSVDFAIISTTEILIPLFSKHPCNLLIPDQYLKIGNTTVSIFMSLSTFFPISITIERFIAMKMARTYEKTRVRLGPILTGCNILLDLLIVFFIYRDEKFDDGSISFVFFPKTLAPKMFTFFWVMFFLNLINFTFNSYLLRQSIRLKVSTSSLATKYQREEVVHSTKFAVFVVFCHVILFGFYVIGIMILRYFGSIFIPDPADLMATRGAFTTMISLYNLVVGSVAVYLNHLIKTRKSEEITGTVRIQATGAVGAQNYENAIFNIWNSV</sequence>
<feature type="chain" id="PRO_0000104505" description="Serpentine receptor class beta-15">
    <location>
        <begin position="1"/>
        <end position="336"/>
    </location>
</feature>
<feature type="transmembrane region" description="Helical" evidence="1">
    <location>
        <begin position="24"/>
        <end position="44"/>
    </location>
</feature>
<feature type="transmembrane region" description="Helical" evidence="1">
    <location>
        <begin position="57"/>
        <end position="77"/>
    </location>
</feature>
<feature type="transmembrane region" description="Helical" evidence="1">
    <location>
        <begin position="109"/>
        <end position="129"/>
    </location>
</feature>
<feature type="transmembrane region" description="Helical" evidence="1">
    <location>
        <begin position="142"/>
        <end position="162"/>
    </location>
</feature>
<feature type="transmembrane region" description="Helical" evidence="1">
    <location>
        <begin position="186"/>
        <end position="206"/>
    </location>
</feature>
<feature type="transmembrane region" description="Helical" evidence="1">
    <location>
        <begin position="237"/>
        <end position="257"/>
    </location>
</feature>
<feature type="transmembrane region" description="Helical" evidence="1">
    <location>
        <begin position="276"/>
        <end position="296"/>
    </location>
</feature>
<keyword id="KW-0472">Membrane</keyword>
<keyword id="KW-1185">Reference proteome</keyword>
<keyword id="KW-0812">Transmembrane</keyword>
<keyword id="KW-1133">Transmembrane helix</keyword>